<keyword id="KW-1185">Reference proteome</keyword>
<keyword id="KW-0687">Ribonucleoprotein</keyword>
<keyword id="KW-0689">Ribosomal protein</keyword>
<keyword id="KW-0694">RNA-binding</keyword>
<keyword id="KW-0699">rRNA-binding</keyword>
<feature type="chain" id="PRO_0000242371" description="Large ribosomal subunit protein uL4">
    <location>
        <begin position="1"/>
        <end position="205"/>
    </location>
</feature>
<feature type="region of interest" description="Disordered" evidence="2">
    <location>
        <begin position="54"/>
        <end position="78"/>
    </location>
</feature>
<feature type="compositionally biased region" description="Basic residues" evidence="2">
    <location>
        <begin position="62"/>
        <end position="71"/>
    </location>
</feature>
<comment type="function">
    <text evidence="1">One of the primary rRNA binding proteins, this protein initially binds near the 5'-end of the 23S rRNA. It is important during the early stages of 50S assembly. It makes multiple contacts with different domains of the 23S rRNA in the assembled 50S subunit and ribosome.</text>
</comment>
<comment type="function">
    <text evidence="1">Forms part of the polypeptide exit tunnel.</text>
</comment>
<comment type="subunit">
    <text evidence="1">Part of the 50S ribosomal subunit.</text>
</comment>
<comment type="similarity">
    <text evidence="1">Belongs to the universal ribosomal protein uL4 family.</text>
</comment>
<dbReference type="EMBL" id="CP000236">
    <property type="protein sequence ID" value="ABD44638.1"/>
    <property type="molecule type" value="Genomic_DNA"/>
</dbReference>
<dbReference type="RefSeq" id="WP_011452577.1">
    <property type="nucleotide sequence ID" value="NC_007799.1"/>
</dbReference>
<dbReference type="SMR" id="Q2GH55"/>
<dbReference type="STRING" id="205920.ECH_0410"/>
<dbReference type="KEGG" id="ech:ECH_0410"/>
<dbReference type="eggNOG" id="COG0088">
    <property type="taxonomic scope" value="Bacteria"/>
</dbReference>
<dbReference type="HOGENOM" id="CLU_041575_5_1_5"/>
<dbReference type="OrthoDB" id="9803201at2"/>
<dbReference type="Proteomes" id="UP000008320">
    <property type="component" value="Chromosome"/>
</dbReference>
<dbReference type="GO" id="GO:1990904">
    <property type="term" value="C:ribonucleoprotein complex"/>
    <property type="evidence" value="ECO:0007669"/>
    <property type="project" value="UniProtKB-KW"/>
</dbReference>
<dbReference type="GO" id="GO:0005840">
    <property type="term" value="C:ribosome"/>
    <property type="evidence" value="ECO:0007669"/>
    <property type="project" value="UniProtKB-KW"/>
</dbReference>
<dbReference type="GO" id="GO:0019843">
    <property type="term" value="F:rRNA binding"/>
    <property type="evidence" value="ECO:0007669"/>
    <property type="project" value="UniProtKB-UniRule"/>
</dbReference>
<dbReference type="GO" id="GO:0003735">
    <property type="term" value="F:structural constituent of ribosome"/>
    <property type="evidence" value="ECO:0007669"/>
    <property type="project" value="InterPro"/>
</dbReference>
<dbReference type="GO" id="GO:0006412">
    <property type="term" value="P:translation"/>
    <property type="evidence" value="ECO:0007669"/>
    <property type="project" value="UniProtKB-UniRule"/>
</dbReference>
<dbReference type="Gene3D" id="3.40.1370.10">
    <property type="match status" value="1"/>
</dbReference>
<dbReference type="HAMAP" id="MF_01328_B">
    <property type="entry name" value="Ribosomal_uL4_B"/>
    <property type="match status" value="1"/>
</dbReference>
<dbReference type="InterPro" id="IPR002136">
    <property type="entry name" value="Ribosomal_uL4"/>
</dbReference>
<dbReference type="InterPro" id="IPR013005">
    <property type="entry name" value="Ribosomal_uL4-like"/>
</dbReference>
<dbReference type="InterPro" id="IPR023574">
    <property type="entry name" value="Ribosomal_uL4_dom_sf"/>
</dbReference>
<dbReference type="NCBIfam" id="TIGR03953">
    <property type="entry name" value="rplD_bact"/>
    <property type="match status" value="1"/>
</dbReference>
<dbReference type="PANTHER" id="PTHR10746">
    <property type="entry name" value="50S RIBOSOMAL PROTEIN L4"/>
    <property type="match status" value="1"/>
</dbReference>
<dbReference type="PANTHER" id="PTHR10746:SF6">
    <property type="entry name" value="LARGE RIBOSOMAL SUBUNIT PROTEIN UL4M"/>
    <property type="match status" value="1"/>
</dbReference>
<dbReference type="Pfam" id="PF00573">
    <property type="entry name" value="Ribosomal_L4"/>
    <property type="match status" value="1"/>
</dbReference>
<dbReference type="SUPFAM" id="SSF52166">
    <property type="entry name" value="Ribosomal protein L4"/>
    <property type="match status" value="1"/>
</dbReference>
<sequence length="205" mass="23113">MEVNIINVNSDRIGTIDLNPLIFSVNYRPDILKMVVDWQLSKRRAGTHKAKTIGDISGTTAKPHRQKHTGRARQGSLRSPQFRGGAVIFGPVVRSHAYSLNKKVRNLGLKVALSLKNSCNKLLILDSIDVNFVKTTQVLQFIKNFEHKSFLIIDKDYNKSVVCSCRNLHNVTLLKQIGTNVLDILRHDCIILTVGAVKYLEERLL</sequence>
<accession>Q2GH55</accession>
<gene>
    <name evidence="1" type="primary">rplD</name>
    <name type="ordered locus">ECH_0410</name>
</gene>
<name>RL4_EHRCR</name>
<proteinExistence type="inferred from homology"/>
<evidence type="ECO:0000255" key="1">
    <source>
        <dbReference type="HAMAP-Rule" id="MF_01328"/>
    </source>
</evidence>
<evidence type="ECO:0000256" key="2">
    <source>
        <dbReference type="SAM" id="MobiDB-lite"/>
    </source>
</evidence>
<evidence type="ECO:0000305" key="3"/>
<protein>
    <recommendedName>
        <fullName evidence="1">Large ribosomal subunit protein uL4</fullName>
    </recommendedName>
    <alternativeName>
        <fullName evidence="3">50S ribosomal protein L4</fullName>
    </alternativeName>
</protein>
<reference key="1">
    <citation type="journal article" date="2006" name="PLoS Genet.">
        <title>Comparative genomics of emerging human ehrlichiosis agents.</title>
        <authorList>
            <person name="Dunning Hotopp J.C."/>
            <person name="Lin M."/>
            <person name="Madupu R."/>
            <person name="Crabtree J."/>
            <person name="Angiuoli S.V."/>
            <person name="Eisen J.A."/>
            <person name="Seshadri R."/>
            <person name="Ren Q."/>
            <person name="Wu M."/>
            <person name="Utterback T.R."/>
            <person name="Smith S."/>
            <person name="Lewis M."/>
            <person name="Khouri H."/>
            <person name="Zhang C."/>
            <person name="Niu H."/>
            <person name="Lin Q."/>
            <person name="Ohashi N."/>
            <person name="Zhi N."/>
            <person name="Nelson W.C."/>
            <person name="Brinkac L.M."/>
            <person name="Dodson R.J."/>
            <person name="Rosovitz M.J."/>
            <person name="Sundaram J.P."/>
            <person name="Daugherty S.C."/>
            <person name="Davidsen T."/>
            <person name="Durkin A.S."/>
            <person name="Gwinn M.L."/>
            <person name="Haft D.H."/>
            <person name="Selengut J.D."/>
            <person name="Sullivan S.A."/>
            <person name="Zafar N."/>
            <person name="Zhou L."/>
            <person name="Benahmed F."/>
            <person name="Forberger H."/>
            <person name="Halpin R."/>
            <person name="Mulligan S."/>
            <person name="Robinson J."/>
            <person name="White O."/>
            <person name="Rikihisa Y."/>
            <person name="Tettelin H."/>
        </authorList>
    </citation>
    <scope>NUCLEOTIDE SEQUENCE [LARGE SCALE GENOMIC DNA]</scope>
    <source>
        <strain>ATCC CRL-10679 / Arkansas</strain>
    </source>
</reference>
<organism>
    <name type="scientific">Ehrlichia chaffeensis (strain ATCC CRL-10679 / Arkansas)</name>
    <dbReference type="NCBI Taxonomy" id="205920"/>
    <lineage>
        <taxon>Bacteria</taxon>
        <taxon>Pseudomonadati</taxon>
        <taxon>Pseudomonadota</taxon>
        <taxon>Alphaproteobacteria</taxon>
        <taxon>Rickettsiales</taxon>
        <taxon>Anaplasmataceae</taxon>
        <taxon>Ehrlichia</taxon>
    </lineage>
</organism>